<gene>
    <name type="primary">MT-CYB</name>
    <name type="synonym">COB</name>
    <name type="synonym">CYTB</name>
    <name type="synonym">MTCYB</name>
</gene>
<feature type="chain" id="PRO_0000254705" description="Cytochrome b">
    <location>
        <begin position="1"/>
        <end position="379"/>
    </location>
</feature>
<feature type="transmembrane region" description="Helical" evidence="2">
    <location>
        <begin position="33"/>
        <end position="53"/>
    </location>
</feature>
<feature type="transmembrane region" description="Helical" evidence="2">
    <location>
        <begin position="77"/>
        <end position="98"/>
    </location>
</feature>
<feature type="transmembrane region" description="Helical" evidence="2">
    <location>
        <begin position="113"/>
        <end position="133"/>
    </location>
</feature>
<feature type="transmembrane region" description="Helical" evidence="2">
    <location>
        <begin position="178"/>
        <end position="198"/>
    </location>
</feature>
<feature type="transmembrane region" description="Helical" evidence="2">
    <location>
        <begin position="226"/>
        <end position="246"/>
    </location>
</feature>
<feature type="transmembrane region" description="Helical" evidence="2">
    <location>
        <begin position="288"/>
        <end position="308"/>
    </location>
</feature>
<feature type="transmembrane region" description="Helical" evidence="2">
    <location>
        <begin position="320"/>
        <end position="340"/>
    </location>
</feature>
<feature type="transmembrane region" description="Helical" evidence="2">
    <location>
        <begin position="347"/>
        <end position="367"/>
    </location>
</feature>
<feature type="binding site" description="axial binding residue" evidence="2">
    <location>
        <position position="83"/>
    </location>
    <ligand>
        <name>heme b</name>
        <dbReference type="ChEBI" id="CHEBI:60344"/>
        <label>b562</label>
    </ligand>
    <ligandPart>
        <name>Fe</name>
        <dbReference type="ChEBI" id="CHEBI:18248"/>
    </ligandPart>
</feature>
<feature type="binding site" description="axial binding residue" evidence="2">
    <location>
        <position position="97"/>
    </location>
    <ligand>
        <name>heme b</name>
        <dbReference type="ChEBI" id="CHEBI:60344"/>
        <label>b566</label>
    </ligand>
    <ligandPart>
        <name>Fe</name>
        <dbReference type="ChEBI" id="CHEBI:18248"/>
    </ligandPart>
</feature>
<feature type="binding site" description="axial binding residue" evidence="2">
    <location>
        <position position="182"/>
    </location>
    <ligand>
        <name>heme b</name>
        <dbReference type="ChEBI" id="CHEBI:60344"/>
        <label>b562</label>
    </ligand>
    <ligandPart>
        <name>Fe</name>
        <dbReference type="ChEBI" id="CHEBI:18248"/>
    </ligandPart>
</feature>
<feature type="binding site" description="axial binding residue" evidence="2">
    <location>
        <position position="196"/>
    </location>
    <ligand>
        <name>heme b</name>
        <dbReference type="ChEBI" id="CHEBI:60344"/>
        <label>b566</label>
    </ligand>
    <ligandPart>
        <name>Fe</name>
        <dbReference type="ChEBI" id="CHEBI:18248"/>
    </ligandPart>
</feature>
<feature type="binding site" evidence="2">
    <location>
        <position position="201"/>
    </location>
    <ligand>
        <name>a ubiquinone</name>
        <dbReference type="ChEBI" id="CHEBI:16389"/>
    </ligand>
</feature>
<sequence>MTNTRKNHPLMKIINNSFIDLPTPPNISSLWNFGSLLGACLTIQVITGLFLAMHYTADTTTAFSSVTHICRDVNYGWTIRYLHANGASMFFMCLFIHVGRGLYYGSFALLETWNIGIMLLFSVMATAFMGYVLPWGQMSFWGATVITNLLSAIPYVGTNLVEWIWGGFSVGKPTLTRFFALHFILPFIISALAMIHLLFLHETGSNNPLGMSSNSDKIPFHPYYTTKDFLGLLLLILLLMTLTLFYPDLLGDPDNYTPANPLNTPPHIKPEWYFLFAYAILRSIPNKLGGVVALILSILILAIIPFLQPSKQQTMMFRPLSQFLFWILVADLLTLTWIGGQPVENPFISIGQTASILYFSLMVFIMPMTCLIENKMLKW</sequence>
<accession>Q20FQ7</accession>
<comment type="function">
    <text evidence="2">Component of the ubiquinol-cytochrome c reductase complex (complex III or cytochrome b-c1 complex) that is part of the mitochondrial respiratory chain. The b-c1 complex mediates electron transfer from ubiquinol to cytochrome c. Contributes to the generation of a proton gradient across the mitochondrial membrane that is then used for ATP synthesis.</text>
</comment>
<comment type="cofactor">
    <cofactor evidence="2">
        <name>heme b</name>
        <dbReference type="ChEBI" id="CHEBI:60344"/>
    </cofactor>
    <text evidence="2">Binds 2 heme b groups non-covalently.</text>
</comment>
<comment type="subunit">
    <text evidence="2">The cytochrome bc1 complex contains 11 subunits: 3 respiratory subunits (MT-CYB, CYC1 and UQCRFS1), 2 core proteins (UQCRC1 and UQCRC2) and 6 low-molecular weight proteins (UQCRH/QCR6, UQCRB/QCR7, UQCRQ/QCR8, UQCR10/QCR9, UQCR11/QCR10 and a cleavage product of UQCRFS1). This cytochrome bc1 complex then forms a dimer.</text>
</comment>
<comment type="subcellular location">
    <subcellularLocation>
        <location evidence="2">Mitochondrion inner membrane</location>
        <topology evidence="2">Multi-pass membrane protein</topology>
    </subcellularLocation>
</comment>
<comment type="miscellaneous">
    <text evidence="1">Heme 1 (or BL or b562) is low-potential and absorbs at about 562 nm, and heme 2 (or BH or b566) is high-potential and absorbs at about 566 nm.</text>
</comment>
<comment type="similarity">
    <text evidence="3 4">Belongs to the cytochrome b family.</text>
</comment>
<comment type="caution">
    <text evidence="2">The full-length protein contains only eight transmembrane helices, not nine as predicted by bioinformatics tools.</text>
</comment>
<dbReference type="EMBL" id="DQ234891">
    <property type="protein sequence ID" value="ABB80440.1"/>
    <property type="molecule type" value="Genomic_DNA"/>
</dbReference>
<dbReference type="EMBL" id="DQ234894">
    <property type="protein sequence ID" value="ABB80443.1"/>
    <property type="molecule type" value="Genomic_DNA"/>
</dbReference>
<dbReference type="EMBL" id="DQ109019">
    <property type="protein sequence ID" value="AAZ92449.1"/>
    <property type="molecule type" value="Genomic_DNA"/>
</dbReference>
<dbReference type="SMR" id="Q20FQ7"/>
<dbReference type="GO" id="GO:0005743">
    <property type="term" value="C:mitochondrial inner membrane"/>
    <property type="evidence" value="ECO:0007669"/>
    <property type="project" value="UniProtKB-SubCell"/>
</dbReference>
<dbReference type="GO" id="GO:0045275">
    <property type="term" value="C:respiratory chain complex III"/>
    <property type="evidence" value="ECO:0007669"/>
    <property type="project" value="InterPro"/>
</dbReference>
<dbReference type="GO" id="GO:0046872">
    <property type="term" value="F:metal ion binding"/>
    <property type="evidence" value="ECO:0007669"/>
    <property type="project" value="UniProtKB-KW"/>
</dbReference>
<dbReference type="GO" id="GO:0008121">
    <property type="term" value="F:ubiquinol-cytochrome-c reductase activity"/>
    <property type="evidence" value="ECO:0007669"/>
    <property type="project" value="InterPro"/>
</dbReference>
<dbReference type="GO" id="GO:0006122">
    <property type="term" value="P:mitochondrial electron transport, ubiquinol to cytochrome c"/>
    <property type="evidence" value="ECO:0007669"/>
    <property type="project" value="TreeGrafter"/>
</dbReference>
<dbReference type="CDD" id="cd00290">
    <property type="entry name" value="cytochrome_b_C"/>
    <property type="match status" value="1"/>
</dbReference>
<dbReference type="CDD" id="cd00284">
    <property type="entry name" value="Cytochrome_b_N"/>
    <property type="match status" value="1"/>
</dbReference>
<dbReference type="FunFam" id="1.20.810.10:FF:000002">
    <property type="entry name" value="Cytochrome b"/>
    <property type="match status" value="1"/>
</dbReference>
<dbReference type="Gene3D" id="1.20.810.10">
    <property type="entry name" value="Cytochrome Bc1 Complex, Chain C"/>
    <property type="match status" value="1"/>
</dbReference>
<dbReference type="InterPro" id="IPR005798">
    <property type="entry name" value="Cyt_b/b6_C"/>
</dbReference>
<dbReference type="InterPro" id="IPR036150">
    <property type="entry name" value="Cyt_b/b6_C_sf"/>
</dbReference>
<dbReference type="InterPro" id="IPR005797">
    <property type="entry name" value="Cyt_b/b6_N"/>
</dbReference>
<dbReference type="InterPro" id="IPR027387">
    <property type="entry name" value="Cytb/b6-like_sf"/>
</dbReference>
<dbReference type="InterPro" id="IPR030689">
    <property type="entry name" value="Cytochrome_b"/>
</dbReference>
<dbReference type="InterPro" id="IPR048260">
    <property type="entry name" value="Cytochrome_b_C_euk/bac"/>
</dbReference>
<dbReference type="InterPro" id="IPR048259">
    <property type="entry name" value="Cytochrome_b_N_euk/bac"/>
</dbReference>
<dbReference type="InterPro" id="IPR016174">
    <property type="entry name" value="Di-haem_cyt_TM"/>
</dbReference>
<dbReference type="PANTHER" id="PTHR19271">
    <property type="entry name" value="CYTOCHROME B"/>
    <property type="match status" value="1"/>
</dbReference>
<dbReference type="PANTHER" id="PTHR19271:SF16">
    <property type="entry name" value="CYTOCHROME B"/>
    <property type="match status" value="1"/>
</dbReference>
<dbReference type="Pfam" id="PF00032">
    <property type="entry name" value="Cytochrom_B_C"/>
    <property type="match status" value="1"/>
</dbReference>
<dbReference type="Pfam" id="PF00033">
    <property type="entry name" value="Cytochrome_B"/>
    <property type="match status" value="1"/>
</dbReference>
<dbReference type="PIRSF" id="PIRSF038885">
    <property type="entry name" value="COB"/>
    <property type="match status" value="1"/>
</dbReference>
<dbReference type="SUPFAM" id="SSF81648">
    <property type="entry name" value="a domain/subunit of cytochrome bc1 complex (Ubiquinol-cytochrome c reductase)"/>
    <property type="match status" value="1"/>
</dbReference>
<dbReference type="SUPFAM" id="SSF81342">
    <property type="entry name" value="Transmembrane di-heme cytochromes"/>
    <property type="match status" value="1"/>
</dbReference>
<dbReference type="PROSITE" id="PS51003">
    <property type="entry name" value="CYTB_CTER"/>
    <property type="match status" value="1"/>
</dbReference>
<dbReference type="PROSITE" id="PS51002">
    <property type="entry name" value="CYTB_NTER"/>
    <property type="match status" value="1"/>
</dbReference>
<name>CYB_LEPRA</name>
<reference key="1">
    <citation type="journal article" date="2006" name="BMC Evol. Biol.">
        <title>Molecular phylogeny and taxonomic revision of the sportive lemurs (Lepilemur, Primates).</title>
        <authorList>
            <person name="Andriaholinirina N."/>
            <person name="Fausser J.-L."/>
            <person name="Roos C."/>
            <person name="Zinner D."/>
            <person name="Thalmann U."/>
            <person name="Rabarivola C."/>
            <person name="Ravoarimanana I."/>
            <person name="Ganzhorn J.U."/>
            <person name="Meier B."/>
            <person name="Hilgartner R."/>
            <person name="Walter L."/>
            <person name="Zaramody A."/>
            <person name="Langer C."/>
            <person name="Hahn T."/>
            <person name="Zimmermann E."/>
            <person name="Radespiel U."/>
            <person name="Craul M."/>
            <person name="Tomiuk J."/>
            <person name="Tattersall I."/>
            <person name="Rumpler Y."/>
        </authorList>
    </citation>
    <scope>NUCLEOTIDE SEQUENCE [GENOMIC DNA]</scope>
</reference>
<geneLocation type="mitochondrion"/>
<protein>
    <recommendedName>
        <fullName>Cytochrome b</fullName>
    </recommendedName>
    <alternativeName>
        <fullName>Complex III subunit 3</fullName>
    </alternativeName>
    <alternativeName>
        <fullName>Complex III subunit III</fullName>
    </alternativeName>
    <alternativeName>
        <fullName>Cytochrome b-c1 complex subunit 3</fullName>
    </alternativeName>
    <alternativeName>
        <fullName>Ubiquinol-cytochrome-c reductase complex cytochrome b subunit</fullName>
    </alternativeName>
</protein>
<evidence type="ECO:0000250" key="1"/>
<evidence type="ECO:0000250" key="2">
    <source>
        <dbReference type="UniProtKB" id="P00157"/>
    </source>
</evidence>
<evidence type="ECO:0000255" key="3">
    <source>
        <dbReference type="PROSITE-ProRule" id="PRU00967"/>
    </source>
</evidence>
<evidence type="ECO:0000255" key="4">
    <source>
        <dbReference type="PROSITE-ProRule" id="PRU00968"/>
    </source>
</evidence>
<organism>
    <name type="scientific">Lepilemur randrianasoloi</name>
    <name type="common">Randrianasoli's sportive lemur</name>
    <dbReference type="NCBI Taxonomy" id="886965"/>
    <lineage>
        <taxon>Eukaryota</taxon>
        <taxon>Metazoa</taxon>
        <taxon>Chordata</taxon>
        <taxon>Craniata</taxon>
        <taxon>Vertebrata</taxon>
        <taxon>Euteleostomi</taxon>
        <taxon>Mammalia</taxon>
        <taxon>Eutheria</taxon>
        <taxon>Euarchontoglires</taxon>
        <taxon>Primates</taxon>
        <taxon>Strepsirrhini</taxon>
        <taxon>Lemuriformes</taxon>
        <taxon>Lepilemuridae</taxon>
        <taxon>Lepilemur</taxon>
    </lineage>
</organism>
<proteinExistence type="inferred from homology"/>
<keyword id="KW-0249">Electron transport</keyword>
<keyword id="KW-0349">Heme</keyword>
<keyword id="KW-0408">Iron</keyword>
<keyword id="KW-0472">Membrane</keyword>
<keyword id="KW-0479">Metal-binding</keyword>
<keyword id="KW-0496">Mitochondrion</keyword>
<keyword id="KW-0999">Mitochondrion inner membrane</keyword>
<keyword id="KW-0679">Respiratory chain</keyword>
<keyword id="KW-0812">Transmembrane</keyword>
<keyword id="KW-1133">Transmembrane helix</keyword>
<keyword id="KW-0813">Transport</keyword>
<keyword id="KW-0830">Ubiquinone</keyword>